<sequence length="212" mass="23804">MTHSKRWLEEHAKDPYVKRAKKEGYPSRAAYKLLEIHQKYKLFKPSMNVIDLGAAPGGWSQVAKDLVGPKGVVIAIDLLPMQSMLDVIFIQGDFNEPEIFNQLEAIVAKKTLTGQVDLVISDMAPNISGIKNVDQSRSLHLVELAWDCAQKLLARGGTFLVKVFQGPGVDRFLINLRPYFNQVKFLKPSASRSRSSEIYILAGEFLGYNQRV</sequence>
<reference key="1">
    <citation type="submission" date="2007-11" db="EMBL/GenBank/DDBJ databases">
        <title>Genome sequencing of phylogenetically and phenotypically diverse Coxiella burnetii isolates.</title>
        <authorList>
            <person name="Seshadri R."/>
            <person name="Samuel J.E."/>
        </authorList>
    </citation>
    <scope>NUCLEOTIDE SEQUENCE [LARGE SCALE GENOMIC DNA]</scope>
    <source>
        <strain>RSA 331 / Henzerling II</strain>
    </source>
</reference>
<comment type="function">
    <text evidence="1">Specifically methylates the uridine in position 2552 of 23S rRNA at the 2'-O position of the ribose in the fully assembled 50S ribosomal subunit.</text>
</comment>
<comment type="catalytic activity">
    <reaction evidence="1">
        <text>uridine(2552) in 23S rRNA + S-adenosyl-L-methionine = 2'-O-methyluridine(2552) in 23S rRNA + S-adenosyl-L-homocysteine + H(+)</text>
        <dbReference type="Rhea" id="RHEA:42720"/>
        <dbReference type="Rhea" id="RHEA-COMP:10202"/>
        <dbReference type="Rhea" id="RHEA-COMP:10203"/>
        <dbReference type="ChEBI" id="CHEBI:15378"/>
        <dbReference type="ChEBI" id="CHEBI:57856"/>
        <dbReference type="ChEBI" id="CHEBI:59789"/>
        <dbReference type="ChEBI" id="CHEBI:65315"/>
        <dbReference type="ChEBI" id="CHEBI:74478"/>
        <dbReference type="EC" id="2.1.1.166"/>
    </reaction>
</comment>
<comment type="subcellular location">
    <subcellularLocation>
        <location evidence="1">Cytoplasm</location>
    </subcellularLocation>
</comment>
<comment type="similarity">
    <text evidence="1">Belongs to the class I-like SAM-binding methyltransferase superfamily. RNA methyltransferase RlmE family.</text>
</comment>
<gene>
    <name evidence="1" type="primary">rlmE</name>
    <name evidence="1" type="synonym">ftsJ</name>
    <name evidence="1" type="synonym">rrmJ</name>
    <name type="ordered locus">COXBURSA331_A1508</name>
</gene>
<dbReference type="EC" id="2.1.1.166" evidence="1"/>
<dbReference type="EMBL" id="CP000890">
    <property type="protein sequence ID" value="ABX78050.1"/>
    <property type="molecule type" value="Genomic_DNA"/>
</dbReference>
<dbReference type="RefSeq" id="WP_012220616.1">
    <property type="nucleotide sequence ID" value="NC_010117.1"/>
</dbReference>
<dbReference type="SMR" id="A9N8M5"/>
<dbReference type="KEGG" id="cbs:COXBURSA331_A1508"/>
<dbReference type="HOGENOM" id="CLU_009422_4_0_6"/>
<dbReference type="GO" id="GO:0005737">
    <property type="term" value="C:cytoplasm"/>
    <property type="evidence" value="ECO:0007669"/>
    <property type="project" value="UniProtKB-SubCell"/>
</dbReference>
<dbReference type="GO" id="GO:0008650">
    <property type="term" value="F:rRNA (uridine-2'-O-)-methyltransferase activity"/>
    <property type="evidence" value="ECO:0007669"/>
    <property type="project" value="UniProtKB-UniRule"/>
</dbReference>
<dbReference type="FunFam" id="3.40.50.150:FF:000005">
    <property type="entry name" value="Ribosomal RNA large subunit methyltransferase E"/>
    <property type="match status" value="1"/>
</dbReference>
<dbReference type="Gene3D" id="3.40.50.150">
    <property type="entry name" value="Vaccinia Virus protein VP39"/>
    <property type="match status" value="1"/>
</dbReference>
<dbReference type="HAMAP" id="MF_01547">
    <property type="entry name" value="RNA_methyltr_E"/>
    <property type="match status" value="1"/>
</dbReference>
<dbReference type="InterPro" id="IPR050082">
    <property type="entry name" value="RNA_methyltr_RlmE"/>
</dbReference>
<dbReference type="InterPro" id="IPR002877">
    <property type="entry name" value="RNA_MeTrfase_FtsJ_dom"/>
</dbReference>
<dbReference type="InterPro" id="IPR015507">
    <property type="entry name" value="rRNA-MeTfrase_E"/>
</dbReference>
<dbReference type="InterPro" id="IPR029063">
    <property type="entry name" value="SAM-dependent_MTases_sf"/>
</dbReference>
<dbReference type="PANTHER" id="PTHR10920">
    <property type="entry name" value="RIBOSOMAL RNA METHYLTRANSFERASE"/>
    <property type="match status" value="1"/>
</dbReference>
<dbReference type="PANTHER" id="PTHR10920:SF18">
    <property type="entry name" value="RRNA METHYLTRANSFERASE 2, MITOCHONDRIAL"/>
    <property type="match status" value="1"/>
</dbReference>
<dbReference type="Pfam" id="PF01728">
    <property type="entry name" value="FtsJ"/>
    <property type="match status" value="1"/>
</dbReference>
<dbReference type="PIRSF" id="PIRSF005461">
    <property type="entry name" value="23S_rRNA_mtase"/>
    <property type="match status" value="1"/>
</dbReference>
<dbReference type="SUPFAM" id="SSF53335">
    <property type="entry name" value="S-adenosyl-L-methionine-dependent methyltransferases"/>
    <property type="match status" value="1"/>
</dbReference>
<organism>
    <name type="scientific">Coxiella burnetii (strain RSA 331 / Henzerling II)</name>
    <dbReference type="NCBI Taxonomy" id="360115"/>
    <lineage>
        <taxon>Bacteria</taxon>
        <taxon>Pseudomonadati</taxon>
        <taxon>Pseudomonadota</taxon>
        <taxon>Gammaproteobacteria</taxon>
        <taxon>Legionellales</taxon>
        <taxon>Coxiellaceae</taxon>
        <taxon>Coxiella</taxon>
    </lineage>
</organism>
<name>RLME_COXBR</name>
<proteinExistence type="inferred from homology"/>
<protein>
    <recommendedName>
        <fullName evidence="1">Ribosomal RNA large subunit methyltransferase E</fullName>
        <ecNumber evidence="1">2.1.1.166</ecNumber>
    </recommendedName>
    <alternativeName>
        <fullName evidence="1">23S rRNA Um2552 methyltransferase</fullName>
    </alternativeName>
    <alternativeName>
        <fullName evidence="1">rRNA (uridine-2'-O-)-methyltransferase</fullName>
    </alternativeName>
</protein>
<evidence type="ECO:0000255" key="1">
    <source>
        <dbReference type="HAMAP-Rule" id="MF_01547"/>
    </source>
</evidence>
<feature type="chain" id="PRO_1000087681" description="Ribosomal RNA large subunit methyltransferase E">
    <location>
        <begin position="1"/>
        <end position="212"/>
    </location>
</feature>
<feature type="active site" description="Proton acceptor" evidence="1">
    <location>
        <position position="162"/>
    </location>
</feature>
<feature type="binding site" evidence="1">
    <location>
        <position position="57"/>
    </location>
    <ligand>
        <name>S-adenosyl-L-methionine</name>
        <dbReference type="ChEBI" id="CHEBI:59789"/>
    </ligand>
</feature>
<feature type="binding site" evidence="1">
    <location>
        <position position="59"/>
    </location>
    <ligand>
        <name>S-adenosyl-L-methionine</name>
        <dbReference type="ChEBI" id="CHEBI:59789"/>
    </ligand>
</feature>
<feature type="binding site" evidence="1">
    <location>
        <position position="77"/>
    </location>
    <ligand>
        <name>S-adenosyl-L-methionine</name>
        <dbReference type="ChEBI" id="CHEBI:59789"/>
    </ligand>
</feature>
<feature type="binding site" evidence="1">
    <location>
        <position position="93"/>
    </location>
    <ligand>
        <name>S-adenosyl-L-methionine</name>
        <dbReference type="ChEBI" id="CHEBI:59789"/>
    </ligand>
</feature>
<feature type="binding site" evidence="1">
    <location>
        <position position="122"/>
    </location>
    <ligand>
        <name>S-adenosyl-L-methionine</name>
        <dbReference type="ChEBI" id="CHEBI:59789"/>
    </ligand>
</feature>
<keyword id="KW-0963">Cytoplasm</keyword>
<keyword id="KW-0489">Methyltransferase</keyword>
<keyword id="KW-0698">rRNA processing</keyword>
<keyword id="KW-0949">S-adenosyl-L-methionine</keyword>
<keyword id="KW-0808">Transferase</keyword>
<accession>A9N8M5</accession>